<evidence type="ECO:0000255" key="1">
    <source>
        <dbReference type="HAMAP-Rule" id="MF_00331"/>
    </source>
</evidence>
<protein>
    <recommendedName>
        <fullName evidence="1">Cysteine desulfurase IscS</fullName>
        <ecNumber evidence="1">2.8.1.7</ecNumber>
    </recommendedName>
</protein>
<organism>
    <name type="scientific">Salmonella paratyphi A (strain AKU_12601)</name>
    <dbReference type="NCBI Taxonomy" id="554290"/>
    <lineage>
        <taxon>Bacteria</taxon>
        <taxon>Pseudomonadati</taxon>
        <taxon>Pseudomonadota</taxon>
        <taxon>Gammaproteobacteria</taxon>
        <taxon>Enterobacterales</taxon>
        <taxon>Enterobacteriaceae</taxon>
        <taxon>Salmonella</taxon>
    </lineage>
</organism>
<keyword id="KW-0001">2Fe-2S</keyword>
<keyword id="KW-0963">Cytoplasm</keyword>
<keyword id="KW-0408">Iron</keyword>
<keyword id="KW-0411">Iron-sulfur</keyword>
<keyword id="KW-0479">Metal-binding</keyword>
<keyword id="KW-0663">Pyridoxal phosphate</keyword>
<keyword id="KW-0808">Transferase</keyword>
<proteinExistence type="inferred from homology"/>
<feature type="chain" id="PRO_1000119646" description="Cysteine desulfurase IscS">
    <location>
        <begin position="1"/>
        <end position="404"/>
    </location>
</feature>
<feature type="active site" description="Cysteine persulfide intermediate" evidence="1">
    <location>
        <position position="328"/>
    </location>
</feature>
<feature type="binding site" evidence="1">
    <location>
        <begin position="75"/>
        <end position="76"/>
    </location>
    <ligand>
        <name>pyridoxal 5'-phosphate</name>
        <dbReference type="ChEBI" id="CHEBI:597326"/>
    </ligand>
</feature>
<feature type="binding site" evidence="1">
    <location>
        <position position="155"/>
    </location>
    <ligand>
        <name>pyridoxal 5'-phosphate</name>
        <dbReference type="ChEBI" id="CHEBI:597326"/>
    </ligand>
</feature>
<feature type="binding site" evidence="1">
    <location>
        <position position="183"/>
    </location>
    <ligand>
        <name>pyridoxal 5'-phosphate</name>
        <dbReference type="ChEBI" id="CHEBI:597326"/>
    </ligand>
</feature>
<feature type="binding site" evidence="1">
    <location>
        <begin position="203"/>
        <end position="205"/>
    </location>
    <ligand>
        <name>pyridoxal 5'-phosphate</name>
        <dbReference type="ChEBI" id="CHEBI:597326"/>
    </ligand>
</feature>
<feature type="binding site" evidence="1">
    <location>
        <position position="243"/>
    </location>
    <ligand>
        <name>pyridoxal 5'-phosphate</name>
        <dbReference type="ChEBI" id="CHEBI:597326"/>
    </ligand>
</feature>
<feature type="binding site" description="via persulfide group" evidence="1">
    <location>
        <position position="328"/>
    </location>
    <ligand>
        <name>[2Fe-2S] cluster</name>
        <dbReference type="ChEBI" id="CHEBI:190135"/>
        <note>ligand shared with IscU</note>
    </ligand>
</feature>
<feature type="modified residue" description="N6-(pyridoxal phosphate)lysine" evidence="1">
    <location>
        <position position="206"/>
    </location>
</feature>
<accession>B5BAW6</accession>
<gene>
    <name evidence="1" type="primary">iscS</name>
    <name type="ordered locus">SSPA0305</name>
</gene>
<comment type="function">
    <text evidence="1">Master enzyme that delivers sulfur to a number of partners involved in Fe-S cluster assembly, tRNA modification or cofactor biosynthesis. Catalyzes the removal of elemental sulfur and selenium atoms from cysteine and selenocysteine to produce alanine. Functions as a sulfur delivery protein for Fe-S cluster synthesis onto IscU, an Fe-S scaffold assembly protein, as well as other S acceptor proteins. Also functions as a selenium delivery protein in the pathway for the biosynthesis of selenophosphate.</text>
</comment>
<comment type="catalytic activity">
    <reaction evidence="1">
        <text>(sulfur carrier)-H + L-cysteine = (sulfur carrier)-SH + L-alanine</text>
        <dbReference type="Rhea" id="RHEA:43892"/>
        <dbReference type="Rhea" id="RHEA-COMP:14737"/>
        <dbReference type="Rhea" id="RHEA-COMP:14739"/>
        <dbReference type="ChEBI" id="CHEBI:29917"/>
        <dbReference type="ChEBI" id="CHEBI:35235"/>
        <dbReference type="ChEBI" id="CHEBI:57972"/>
        <dbReference type="ChEBI" id="CHEBI:64428"/>
        <dbReference type="EC" id="2.8.1.7"/>
    </reaction>
</comment>
<comment type="cofactor">
    <cofactor evidence="1">
        <name>pyridoxal 5'-phosphate</name>
        <dbReference type="ChEBI" id="CHEBI:597326"/>
    </cofactor>
</comment>
<comment type="pathway">
    <text evidence="1">Cofactor biosynthesis; iron-sulfur cluster biosynthesis.</text>
</comment>
<comment type="subunit">
    <text evidence="1">Homodimer. Forms a heterotetramer with IscU, interacts with other sulfur acceptors.</text>
</comment>
<comment type="subcellular location">
    <subcellularLocation>
        <location evidence="1">Cytoplasm</location>
    </subcellularLocation>
</comment>
<comment type="similarity">
    <text evidence="1">Belongs to the class-V pyridoxal-phosphate-dependent aminotransferase family. NifS/IscS subfamily.</text>
</comment>
<reference key="1">
    <citation type="journal article" date="2009" name="BMC Genomics">
        <title>Pseudogene accumulation in the evolutionary histories of Salmonella enterica serovars Paratyphi A and Typhi.</title>
        <authorList>
            <person name="Holt K.E."/>
            <person name="Thomson N.R."/>
            <person name="Wain J."/>
            <person name="Langridge G.C."/>
            <person name="Hasan R."/>
            <person name="Bhutta Z.A."/>
            <person name="Quail M.A."/>
            <person name="Norbertczak H."/>
            <person name="Walker D."/>
            <person name="Simmonds M."/>
            <person name="White B."/>
            <person name="Bason N."/>
            <person name="Mungall K."/>
            <person name="Dougan G."/>
            <person name="Parkhill J."/>
        </authorList>
    </citation>
    <scope>NUCLEOTIDE SEQUENCE [LARGE SCALE GENOMIC DNA]</scope>
    <source>
        <strain>AKU_12601</strain>
    </source>
</reference>
<dbReference type="EC" id="2.8.1.7" evidence="1"/>
<dbReference type="EMBL" id="FM200053">
    <property type="protein sequence ID" value="CAR58422.1"/>
    <property type="molecule type" value="Genomic_DNA"/>
</dbReference>
<dbReference type="RefSeq" id="WP_000775263.1">
    <property type="nucleotide sequence ID" value="NC_011147.1"/>
</dbReference>
<dbReference type="SMR" id="B5BAW6"/>
<dbReference type="KEGG" id="sek:SSPA0305"/>
<dbReference type="HOGENOM" id="CLU_003433_0_2_6"/>
<dbReference type="UniPathway" id="UPA00266"/>
<dbReference type="Proteomes" id="UP000001869">
    <property type="component" value="Chromosome"/>
</dbReference>
<dbReference type="GO" id="GO:1990221">
    <property type="term" value="C:L-cysteine desulfurase complex"/>
    <property type="evidence" value="ECO:0007669"/>
    <property type="project" value="UniProtKB-ARBA"/>
</dbReference>
<dbReference type="GO" id="GO:0051537">
    <property type="term" value="F:2 iron, 2 sulfur cluster binding"/>
    <property type="evidence" value="ECO:0007669"/>
    <property type="project" value="UniProtKB-UniRule"/>
</dbReference>
<dbReference type="GO" id="GO:0031071">
    <property type="term" value="F:cysteine desulfurase activity"/>
    <property type="evidence" value="ECO:0007669"/>
    <property type="project" value="UniProtKB-UniRule"/>
</dbReference>
<dbReference type="GO" id="GO:0046872">
    <property type="term" value="F:metal ion binding"/>
    <property type="evidence" value="ECO:0007669"/>
    <property type="project" value="UniProtKB-KW"/>
</dbReference>
<dbReference type="GO" id="GO:0030170">
    <property type="term" value="F:pyridoxal phosphate binding"/>
    <property type="evidence" value="ECO:0007669"/>
    <property type="project" value="UniProtKB-UniRule"/>
</dbReference>
<dbReference type="GO" id="GO:0044571">
    <property type="term" value="P:[2Fe-2S] cluster assembly"/>
    <property type="evidence" value="ECO:0007669"/>
    <property type="project" value="UniProtKB-UniRule"/>
</dbReference>
<dbReference type="FunFam" id="3.40.640.10:FF:000003">
    <property type="entry name" value="Cysteine desulfurase IscS"/>
    <property type="match status" value="1"/>
</dbReference>
<dbReference type="FunFam" id="3.90.1150.10:FF:000002">
    <property type="entry name" value="Cysteine desulfurase IscS"/>
    <property type="match status" value="1"/>
</dbReference>
<dbReference type="Gene3D" id="3.90.1150.10">
    <property type="entry name" value="Aspartate Aminotransferase, domain 1"/>
    <property type="match status" value="1"/>
</dbReference>
<dbReference type="Gene3D" id="3.40.640.10">
    <property type="entry name" value="Type I PLP-dependent aspartate aminotransferase-like (Major domain)"/>
    <property type="match status" value="1"/>
</dbReference>
<dbReference type="HAMAP" id="MF_00331">
    <property type="entry name" value="Cys_desulf_IscS"/>
    <property type="match status" value="1"/>
</dbReference>
<dbReference type="InterPro" id="IPR000192">
    <property type="entry name" value="Aminotrans_V_dom"/>
</dbReference>
<dbReference type="InterPro" id="IPR020578">
    <property type="entry name" value="Aminotrans_V_PyrdxlP_BS"/>
</dbReference>
<dbReference type="InterPro" id="IPR010240">
    <property type="entry name" value="Cys_deSase_IscS"/>
</dbReference>
<dbReference type="InterPro" id="IPR016454">
    <property type="entry name" value="Cysteine_dSase"/>
</dbReference>
<dbReference type="InterPro" id="IPR015424">
    <property type="entry name" value="PyrdxlP-dep_Trfase"/>
</dbReference>
<dbReference type="InterPro" id="IPR015421">
    <property type="entry name" value="PyrdxlP-dep_Trfase_major"/>
</dbReference>
<dbReference type="InterPro" id="IPR015422">
    <property type="entry name" value="PyrdxlP-dep_Trfase_small"/>
</dbReference>
<dbReference type="NCBIfam" id="TIGR02006">
    <property type="entry name" value="IscS"/>
    <property type="match status" value="1"/>
</dbReference>
<dbReference type="NCBIfam" id="NF002806">
    <property type="entry name" value="PRK02948.1"/>
    <property type="match status" value="1"/>
</dbReference>
<dbReference type="NCBIfam" id="NF010611">
    <property type="entry name" value="PRK14012.1"/>
    <property type="match status" value="1"/>
</dbReference>
<dbReference type="PANTHER" id="PTHR11601:SF34">
    <property type="entry name" value="CYSTEINE DESULFURASE"/>
    <property type="match status" value="1"/>
</dbReference>
<dbReference type="PANTHER" id="PTHR11601">
    <property type="entry name" value="CYSTEINE DESULFURYLASE FAMILY MEMBER"/>
    <property type="match status" value="1"/>
</dbReference>
<dbReference type="Pfam" id="PF00266">
    <property type="entry name" value="Aminotran_5"/>
    <property type="match status" value="1"/>
</dbReference>
<dbReference type="PIRSF" id="PIRSF005572">
    <property type="entry name" value="NifS"/>
    <property type="match status" value="1"/>
</dbReference>
<dbReference type="SUPFAM" id="SSF53383">
    <property type="entry name" value="PLP-dependent transferases"/>
    <property type="match status" value="1"/>
</dbReference>
<dbReference type="PROSITE" id="PS00595">
    <property type="entry name" value="AA_TRANSFER_CLASS_5"/>
    <property type="match status" value="1"/>
</dbReference>
<name>ISCS_SALPK</name>
<sequence>MKLPIYLDYSATTPVDPRVAEKMMQFLTLDGTFGNPASRSHRFGWQAEEAVDIARNQIAELVGADPREIVFTSGATESDNLAIKGAANFYQKKGKHIITSKTEHKAVLDTCRQLEREGFEVTYLAPQRNGIIDLNELEAAMRDDTILVSIMHVNNEIGVVQDIATIGEMCRARGIIYHVDATQSVGKLPIDLSQLKVDLMSFSGHKIYGPKGIGALYVRRKPRIRIEAQMHGGGHERGMRSGTLPVHQIVGMGEAYRIAKEEMETEMARLRGLRNRLWNGIKDIEEVYLNGDLEQGAPNILNVSFNYVEGESLIMALKDLAVSSGSACTSASLEPSYVLRALGMNDELAHSSIRFSLGRFTTEEEIDYTIDLVRKSIGRLRDLSPLWEMYKQGVDLNSIEWAHH</sequence>